<dbReference type="EMBL" id="CP000390">
    <property type="protein sequence ID" value="ABG62666.1"/>
    <property type="molecule type" value="Genomic_DNA"/>
</dbReference>
<dbReference type="SMR" id="Q11IV9"/>
<dbReference type="STRING" id="266779.Meso_1270"/>
<dbReference type="KEGG" id="mes:Meso_1270"/>
<dbReference type="eggNOG" id="COG0522">
    <property type="taxonomic scope" value="Bacteria"/>
</dbReference>
<dbReference type="HOGENOM" id="CLU_092403_0_0_5"/>
<dbReference type="OrthoDB" id="9803672at2"/>
<dbReference type="GO" id="GO:0015935">
    <property type="term" value="C:small ribosomal subunit"/>
    <property type="evidence" value="ECO:0007669"/>
    <property type="project" value="InterPro"/>
</dbReference>
<dbReference type="GO" id="GO:0019843">
    <property type="term" value="F:rRNA binding"/>
    <property type="evidence" value="ECO:0007669"/>
    <property type="project" value="UniProtKB-UniRule"/>
</dbReference>
<dbReference type="GO" id="GO:0003735">
    <property type="term" value="F:structural constituent of ribosome"/>
    <property type="evidence" value="ECO:0007669"/>
    <property type="project" value="InterPro"/>
</dbReference>
<dbReference type="GO" id="GO:0042274">
    <property type="term" value="P:ribosomal small subunit biogenesis"/>
    <property type="evidence" value="ECO:0007669"/>
    <property type="project" value="TreeGrafter"/>
</dbReference>
<dbReference type="GO" id="GO:0006412">
    <property type="term" value="P:translation"/>
    <property type="evidence" value="ECO:0007669"/>
    <property type="project" value="UniProtKB-UniRule"/>
</dbReference>
<dbReference type="CDD" id="cd00165">
    <property type="entry name" value="S4"/>
    <property type="match status" value="1"/>
</dbReference>
<dbReference type="FunFam" id="3.10.290.10:FF:000001">
    <property type="entry name" value="30S ribosomal protein S4"/>
    <property type="match status" value="1"/>
</dbReference>
<dbReference type="Gene3D" id="1.10.1050.10">
    <property type="entry name" value="Ribosomal Protein S4 Delta 41, Chain A, domain 1"/>
    <property type="match status" value="1"/>
</dbReference>
<dbReference type="Gene3D" id="3.10.290.10">
    <property type="entry name" value="RNA-binding S4 domain"/>
    <property type="match status" value="1"/>
</dbReference>
<dbReference type="HAMAP" id="MF_01306_B">
    <property type="entry name" value="Ribosomal_uS4_B"/>
    <property type="match status" value="1"/>
</dbReference>
<dbReference type="InterPro" id="IPR022801">
    <property type="entry name" value="Ribosomal_uS4"/>
</dbReference>
<dbReference type="InterPro" id="IPR005709">
    <property type="entry name" value="Ribosomal_uS4_bac-type"/>
</dbReference>
<dbReference type="InterPro" id="IPR018079">
    <property type="entry name" value="Ribosomal_uS4_CS"/>
</dbReference>
<dbReference type="InterPro" id="IPR001912">
    <property type="entry name" value="Ribosomal_uS4_N"/>
</dbReference>
<dbReference type="InterPro" id="IPR002942">
    <property type="entry name" value="S4_RNA-bd"/>
</dbReference>
<dbReference type="InterPro" id="IPR036986">
    <property type="entry name" value="S4_RNA-bd_sf"/>
</dbReference>
<dbReference type="NCBIfam" id="NF003717">
    <property type="entry name" value="PRK05327.1"/>
    <property type="match status" value="1"/>
</dbReference>
<dbReference type="NCBIfam" id="TIGR01017">
    <property type="entry name" value="rpsD_bact"/>
    <property type="match status" value="1"/>
</dbReference>
<dbReference type="PANTHER" id="PTHR11831">
    <property type="entry name" value="30S 40S RIBOSOMAL PROTEIN"/>
    <property type="match status" value="1"/>
</dbReference>
<dbReference type="PANTHER" id="PTHR11831:SF4">
    <property type="entry name" value="SMALL RIBOSOMAL SUBUNIT PROTEIN US4M"/>
    <property type="match status" value="1"/>
</dbReference>
<dbReference type="Pfam" id="PF00163">
    <property type="entry name" value="Ribosomal_S4"/>
    <property type="match status" value="1"/>
</dbReference>
<dbReference type="Pfam" id="PF01479">
    <property type="entry name" value="S4"/>
    <property type="match status" value="1"/>
</dbReference>
<dbReference type="SMART" id="SM01390">
    <property type="entry name" value="Ribosomal_S4"/>
    <property type="match status" value="1"/>
</dbReference>
<dbReference type="SMART" id="SM00363">
    <property type="entry name" value="S4"/>
    <property type="match status" value="1"/>
</dbReference>
<dbReference type="SUPFAM" id="SSF55174">
    <property type="entry name" value="Alpha-L RNA-binding motif"/>
    <property type="match status" value="1"/>
</dbReference>
<dbReference type="PROSITE" id="PS00632">
    <property type="entry name" value="RIBOSOMAL_S4"/>
    <property type="match status" value="1"/>
</dbReference>
<dbReference type="PROSITE" id="PS50889">
    <property type="entry name" value="S4"/>
    <property type="match status" value="1"/>
</dbReference>
<reference key="1">
    <citation type="submission" date="2006-06" db="EMBL/GenBank/DDBJ databases">
        <title>Complete sequence of chromosome of Mesorhizobium sp. BNC1.</title>
        <authorList>
            <consortium name="US DOE Joint Genome Institute"/>
            <person name="Copeland A."/>
            <person name="Lucas S."/>
            <person name="Lapidus A."/>
            <person name="Barry K."/>
            <person name="Detter J.C."/>
            <person name="Glavina del Rio T."/>
            <person name="Hammon N."/>
            <person name="Israni S."/>
            <person name="Dalin E."/>
            <person name="Tice H."/>
            <person name="Pitluck S."/>
            <person name="Chertkov O."/>
            <person name="Brettin T."/>
            <person name="Bruce D."/>
            <person name="Han C."/>
            <person name="Tapia R."/>
            <person name="Gilna P."/>
            <person name="Schmutz J."/>
            <person name="Larimer F."/>
            <person name="Land M."/>
            <person name="Hauser L."/>
            <person name="Kyrpides N."/>
            <person name="Mikhailova N."/>
            <person name="Richardson P."/>
        </authorList>
    </citation>
    <scope>NUCLEOTIDE SEQUENCE [LARGE SCALE GENOMIC DNA]</scope>
    <source>
        <strain>BNC1</strain>
    </source>
</reference>
<feature type="chain" id="PRO_0000293310" description="Small ribosomal subunit protein uS4">
    <location>
        <begin position="1"/>
        <end position="205"/>
    </location>
</feature>
<feature type="domain" description="S4 RNA-binding" evidence="1">
    <location>
        <begin position="94"/>
        <end position="157"/>
    </location>
</feature>
<feature type="region of interest" description="Disordered" evidence="2">
    <location>
        <begin position="1"/>
        <end position="49"/>
    </location>
</feature>
<protein>
    <recommendedName>
        <fullName evidence="1">Small ribosomal subunit protein uS4</fullName>
    </recommendedName>
    <alternativeName>
        <fullName evidence="3">30S ribosomal protein S4</fullName>
    </alternativeName>
</protein>
<proteinExistence type="inferred from homology"/>
<keyword id="KW-0687">Ribonucleoprotein</keyword>
<keyword id="KW-0689">Ribosomal protein</keyword>
<keyword id="KW-0694">RNA-binding</keyword>
<keyword id="KW-0699">rRNA-binding</keyword>
<gene>
    <name evidence="1" type="primary">rpsD</name>
    <name type="ordered locus">Meso_1270</name>
</gene>
<organism>
    <name type="scientific">Chelativorans sp. (strain BNC1)</name>
    <dbReference type="NCBI Taxonomy" id="266779"/>
    <lineage>
        <taxon>Bacteria</taxon>
        <taxon>Pseudomonadati</taxon>
        <taxon>Pseudomonadota</taxon>
        <taxon>Alphaproteobacteria</taxon>
        <taxon>Hyphomicrobiales</taxon>
        <taxon>Phyllobacteriaceae</taxon>
        <taxon>Chelativorans</taxon>
    </lineage>
</organism>
<comment type="function">
    <text evidence="1">One of the primary rRNA binding proteins, it binds directly to 16S rRNA where it nucleates assembly of the body of the 30S subunit.</text>
</comment>
<comment type="function">
    <text evidence="1">With S5 and S12 plays an important role in translational accuracy.</text>
</comment>
<comment type="subunit">
    <text evidence="1">Part of the 30S ribosomal subunit. Contacts protein S5. The interaction surface between S4 and S5 is involved in control of translational fidelity.</text>
</comment>
<comment type="similarity">
    <text evidence="1">Belongs to the universal ribosomal protein uS4 family.</text>
</comment>
<evidence type="ECO:0000255" key="1">
    <source>
        <dbReference type="HAMAP-Rule" id="MF_01306"/>
    </source>
</evidence>
<evidence type="ECO:0000256" key="2">
    <source>
        <dbReference type="SAM" id="MobiDB-lite"/>
    </source>
</evidence>
<evidence type="ECO:0000305" key="3"/>
<sequence length="205" mass="23806">MSKRQSAKYKLDRRMGENIWGRPKSPVNRREYGPGQHGQRRKGKLSDFGQQLRAKQKLKGYYGDLSEKQFRRIYDEANRRKGETTENLIGLLESRLDAIVFRAKFVPTPFAARQFVNHGHVKVNGRRVNIPSYRCKPGDVIEVREKSKQLTVVLESVALAERDVPDYIEVDHNKMTAKYVRMPALADVPYAVHMEPNLVIEYYSR</sequence>
<accession>Q11IV9</accession>
<name>RS4_CHESB</name>